<keyword id="KW-0472">Membrane</keyword>
<keyword id="KW-0496">Mitochondrion</keyword>
<keyword id="KW-1000">Mitochondrion outer membrane</keyword>
<keyword id="KW-0597">Phosphoprotein</keyword>
<keyword id="KW-1185">Reference proteome</keyword>
<keyword id="KW-0677">Repeat</keyword>
<keyword id="KW-0812">Transmembrane</keyword>
<keyword id="KW-1133">Transmembrane helix</keyword>
<keyword id="KW-0813">Transport</keyword>
<comment type="function">
    <text evidence="2">Transmembrane protein of the mitochondrial outer membrane that controls mitochondrial organization. May regulate the assembly of the MICOS (mitochondrial contact site and cristae organizing system) complex which is essential to the biogenesis and dynamics of mitochondrial cristae, the inwards folds of the inner mitochondrial membrane. Through its interaction with the EMC (endoplasmic reticulum membrane protein complex), could regulate mitochondrial lipid homeostasis and thereby mitochondrial fission.</text>
</comment>
<comment type="subunit">
    <text evidence="2">Associates with the mitochondrial contact site and cristae organizing system (MICOS) complex. May associate with the endoplasmic reticulum membrane protein complex (EMC).</text>
</comment>
<comment type="subcellular location">
    <subcellularLocation>
        <location evidence="2">Mitochondrion outer membrane</location>
        <topology evidence="3">Multi-pass membrane protein</topology>
    </subcellularLocation>
</comment>
<comment type="similarity">
    <text evidence="5">Belongs to the mitochondrial carrier (TC 2.A.29) family.</text>
</comment>
<organism>
    <name type="scientific">Mus musculus</name>
    <name type="common">Mouse</name>
    <dbReference type="NCBI Taxonomy" id="10090"/>
    <lineage>
        <taxon>Eukaryota</taxon>
        <taxon>Metazoa</taxon>
        <taxon>Chordata</taxon>
        <taxon>Craniata</taxon>
        <taxon>Vertebrata</taxon>
        <taxon>Euteleostomi</taxon>
        <taxon>Mammalia</taxon>
        <taxon>Eutheria</taxon>
        <taxon>Euarchontoglires</taxon>
        <taxon>Glires</taxon>
        <taxon>Rodentia</taxon>
        <taxon>Myomorpha</taxon>
        <taxon>Muroidea</taxon>
        <taxon>Muridae</taxon>
        <taxon>Murinae</taxon>
        <taxon>Mus</taxon>
        <taxon>Mus</taxon>
    </lineage>
</organism>
<evidence type="ECO:0000250" key="1">
    <source>
        <dbReference type="UniProtKB" id="Q5EB62"/>
    </source>
</evidence>
<evidence type="ECO:0000250" key="2">
    <source>
        <dbReference type="UniProtKB" id="Q96AG3"/>
    </source>
</evidence>
<evidence type="ECO:0000255" key="3"/>
<evidence type="ECO:0000256" key="4">
    <source>
        <dbReference type="SAM" id="MobiDB-lite"/>
    </source>
</evidence>
<evidence type="ECO:0000305" key="5"/>
<evidence type="ECO:0000312" key="6">
    <source>
        <dbReference type="MGI" id="MGI:1914703"/>
    </source>
</evidence>
<evidence type="ECO:0007744" key="7">
    <source>
    </source>
</evidence>
<proteinExistence type="evidence at protein level"/>
<gene>
    <name evidence="6" type="primary">Slc25a46</name>
</gene>
<sequence>MHPRRPEGFDGLGYRGGVRDDPAFGGPFHARSFGSGTELGHWVTTPPDIPGSRNLHWGEKSPSYGVPSAPPTLEGSAEEPFPGGGEGPRPGPSSEQLNRFAGFGIGLASLFTENVLAHPCIVLRRQCQVNYHARHYHLTPFSIINIMYSFNKTQGPRALWKGMGSTFIVQGVTLGAEGIISEFTPLPREVSHKLNPKQIGEHLLLKCLTYMVAMPFYSASLIETVQSEIIRDNTGILECVKEGIGRVIGLGVPHSKRLLPLFSLIFPTVLHGVLHYIISSIIQKIVLLILKRKTYNSHLAESTSPMQNMLDAYFPELIANFAASLCSDVILYPLETVLHRLHIQGTRTIIDNTDLGYEVLPINTQYEGMRDCINTIKQEEGVFGFYKGFGAVIIQYTLHATILQITKMIYSTLLQNSI</sequence>
<name>S2546_MOUSE</name>
<reference key="1">
    <citation type="journal article" date="2005" name="Science">
        <title>The transcriptional landscape of the mammalian genome.</title>
        <authorList>
            <person name="Carninci P."/>
            <person name="Kasukawa T."/>
            <person name="Katayama S."/>
            <person name="Gough J."/>
            <person name="Frith M.C."/>
            <person name="Maeda N."/>
            <person name="Oyama R."/>
            <person name="Ravasi T."/>
            <person name="Lenhard B."/>
            <person name="Wells C."/>
            <person name="Kodzius R."/>
            <person name="Shimokawa K."/>
            <person name="Bajic V.B."/>
            <person name="Brenner S.E."/>
            <person name="Batalov S."/>
            <person name="Forrest A.R."/>
            <person name="Zavolan M."/>
            <person name="Davis M.J."/>
            <person name="Wilming L.G."/>
            <person name="Aidinis V."/>
            <person name="Allen J.E."/>
            <person name="Ambesi-Impiombato A."/>
            <person name="Apweiler R."/>
            <person name="Aturaliya R.N."/>
            <person name="Bailey T.L."/>
            <person name="Bansal M."/>
            <person name="Baxter L."/>
            <person name="Beisel K.W."/>
            <person name="Bersano T."/>
            <person name="Bono H."/>
            <person name="Chalk A.M."/>
            <person name="Chiu K.P."/>
            <person name="Choudhary V."/>
            <person name="Christoffels A."/>
            <person name="Clutterbuck D.R."/>
            <person name="Crowe M.L."/>
            <person name="Dalla E."/>
            <person name="Dalrymple B.P."/>
            <person name="de Bono B."/>
            <person name="Della Gatta G."/>
            <person name="di Bernardo D."/>
            <person name="Down T."/>
            <person name="Engstrom P."/>
            <person name="Fagiolini M."/>
            <person name="Faulkner G."/>
            <person name="Fletcher C.F."/>
            <person name="Fukushima T."/>
            <person name="Furuno M."/>
            <person name="Futaki S."/>
            <person name="Gariboldi M."/>
            <person name="Georgii-Hemming P."/>
            <person name="Gingeras T.R."/>
            <person name="Gojobori T."/>
            <person name="Green R.E."/>
            <person name="Gustincich S."/>
            <person name="Harbers M."/>
            <person name="Hayashi Y."/>
            <person name="Hensch T.K."/>
            <person name="Hirokawa N."/>
            <person name="Hill D."/>
            <person name="Huminiecki L."/>
            <person name="Iacono M."/>
            <person name="Ikeo K."/>
            <person name="Iwama A."/>
            <person name="Ishikawa T."/>
            <person name="Jakt M."/>
            <person name="Kanapin A."/>
            <person name="Katoh M."/>
            <person name="Kawasawa Y."/>
            <person name="Kelso J."/>
            <person name="Kitamura H."/>
            <person name="Kitano H."/>
            <person name="Kollias G."/>
            <person name="Krishnan S.P."/>
            <person name="Kruger A."/>
            <person name="Kummerfeld S.K."/>
            <person name="Kurochkin I.V."/>
            <person name="Lareau L.F."/>
            <person name="Lazarevic D."/>
            <person name="Lipovich L."/>
            <person name="Liu J."/>
            <person name="Liuni S."/>
            <person name="McWilliam S."/>
            <person name="Madan Babu M."/>
            <person name="Madera M."/>
            <person name="Marchionni L."/>
            <person name="Matsuda H."/>
            <person name="Matsuzawa S."/>
            <person name="Miki H."/>
            <person name="Mignone F."/>
            <person name="Miyake S."/>
            <person name="Morris K."/>
            <person name="Mottagui-Tabar S."/>
            <person name="Mulder N."/>
            <person name="Nakano N."/>
            <person name="Nakauchi H."/>
            <person name="Ng P."/>
            <person name="Nilsson R."/>
            <person name="Nishiguchi S."/>
            <person name="Nishikawa S."/>
            <person name="Nori F."/>
            <person name="Ohara O."/>
            <person name="Okazaki Y."/>
            <person name="Orlando V."/>
            <person name="Pang K.C."/>
            <person name="Pavan W.J."/>
            <person name="Pavesi G."/>
            <person name="Pesole G."/>
            <person name="Petrovsky N."/>
            <person name="Piazza S."/>
            <person name="Reed J."/>
            <person name="Reid J.F."/>
            <person name="Ring B.Z."/>
            <person name="Ringwald M."/>
            <person name="Rost B."/>
            <person name="Ruan Y."/>
            <person name="Salzberg S.L."/>
            <person name="Sandelin A."/>
            <person name="Schneider C."/>
            <person name="Schoenbach C."/>
            <person name="Sekiguchi K."/>
            <person name="Semple C.A."/>
            <person name="Seno S."/>
            <person name="Sessa L."/>
            <person name="Sheng Y."/>
            <person name="Shibata Y."/>
            <person name="Shimada H."/>
            <person name="Shimada K."/>
            <person name="Silva D."/>
            <person name="Sinclair B."/>
            <person name="Sperling S."/>
            <person name="Stupka E."/>
            <person name="Sugiura K."/>
            <person name="Sultana R."/>
            <person name="Takenaka Y."/>
            <person name="Taki K."/>
            <person name="Tammoja K."/>
            <person name="Tan S.L."/>
            <person name="Tang S."/>
            <person name="Taylor M.S."/>
            <person name="Tegner J."/>
            <person name="Teichmann S.A."/>
            <person name="Ueda H.R."/>
            <person name="van Nimwegen E."/>
            <person name="Verardo R."/>
            <person name="Wei C.L."/>
            <person name="Yagi K."/>
            <person name="Yamanishi H."/>
            <person name="Zabarovsky E."/>
            <person name="Zhu S."/>
            <person name="Zimmer A."/>
            <person name="Hide W."/>
            <person name="Bult C."/>
            <person name="Grimmond S.M."/>
            <person name="Teasdale R.D."/>
            <person name="Liu E.T."/>
            <person name="Brusic V."/>
            <person name="Quackenbush J."/>
            <person name="Wahlestedt C."/>
            <person name="Mattick J.S."/>
            <person name="Hume D.A."/>
            <person name="Kai C."/>
            <person name="Sasaki D."/>
            <person name="Tomaru Y."/>
            <person name="Fukuda S."/>
            <person name="Kanamori-Katayama M."/>
            <person name="Suzuki M."/>
            <person name="Aoki J."/>
            <person name="Arakawa T."/>
            <person name="Iida J."/>
            <person name="Imamura K."/>
            <person name="Itoh M."/>
            <person name="Kato T."/>
            <person name="Kawaji H."/>
            <person name="Kawagashira N."/>
            <person name="Kawashima T."/>
            <person name="Kojima M."/>
            <person name="Kondo S."/>
            <person name="Konno H."/>
            <person name="Nakano K."/>
            <person name="Ninomiya N."/>
            <person name="Nishio T."/>
            <person name="Okada M."/>
            <person name="Plessy C."/>
            <person name="Shibata K."/>
            <person name="Shiraki T."/>
            <person name="Suzuki S."/>
            <person name="Tagami M."/>
            <person name="Waki K."/>
            <person name="Watahiki A."/>
            <person name="Okamura-Oho Y."/>
            <person name="Suzuki H."/>
            <person name="Kawai J."/>
            <person name="Hayashizaki Y."/>
        </authorList>
    </citation>
    <scope>NUCLEOTIDE SEQUENCE [LARGE SCALE MRNA]</scope>
    <source>
        <strain>C57BL/6J</strain>
        <tissue>Forelimb</tissue>
        <tissue>Lung</tissue>
        <tissue>Small intestine</tissue>
        <tissue>Xiphoid cartilage</tissue>
    </source>
</reference>
<reference key="2">
    <citation type="journal article" date="2004" name="Genome Res.">
        <title>The status, quality, and expansion of the NIH full-length cDNA project: the Mammalian Gene Collection (MGC).</title>
        <authorList>
            <consortium name="The MGC Project Team"/>
        </authorList>
    </citation>
    <scope>NUCLEOTIDE SEQUENCE [LARGE SCALE MRNA]</scope>
    <source>
        <strain>Czech II</strain>
        <tissue>Mammary tumor</tissue>
    </source>
</reference>
<reference key="3">
    <citation type="journal article" date="2007" name="Proc. Natl. Acad. Sci. U.S.A.">
        <title>Large-scale phosphorylation analysis of mouse liver.</title>
        <authorList>
            <person name="Villen J."/>
            <person name="Beausoleil S.A."/>
            <person name="Gerber S.A."/>
            <person name="Gygi S.P."/>
        </authorList>
    </citation>
    <scope>IDENTIFICATION BY MASS SPECTROMETRY [LARGE SCALE ANALYSIS]</scope>
    <source>
        <tissue>Liver</tissue>
    </source>
</reference>
<reference key="4">
    <citation type="journal article" date="2010" name="Cell">
        <title>A tissue-specific atlas of mouse protein phosphorylation and expression.</title>
        <authorList>
            <person name="Huttlin E.L."/>
            <person name="Jedrychowski M.P."/>
            <person name="Elias J.E."/>
            <person name="Goswami T."/>
            <person name="Rad R."/>
            <person name="Beausoleil S.A."/>
            <person name="Villen J."/>
            <person name="Haas W."/>
            <person name="Sowa M.E."/>
            <person name="Gygi S.P."/>
        </authorList>
    </citation>
    <scope>PHOSPHORYLATION [LARGE SCALE ANALYSIS] AT SER-32 AND THR-45</scope>
    <scope>IDENTIFICATION BY MASS SPECTROMETRY [LARGE SCALE ANALYSIS]</scope>
    <source>
        <tissue>Brain</tissue>
        <tissue>Brown adipose tissue</tissue>
        <tissue>Heart</tissue>
        <tissue>Kidney</tissue>
        <tissue>Liver</tissue>
        <tissue>Lung</tissue>
        <tissue>Spleen</tissue>
        <tissue>Testis</tissue>
    </source>
</reference>
<dbReference type="EMBL" id="AK004625">
    <property type="protein sequence ID" value="BAB23420.1"/>
    <property type="molecule type" value="mRNA"/>
</dbReference>
<dbReference type="EMBL" id="AK008131">
    <property type="protein sequence ID" value="BAB25481.1"/>
    <property type="molecule type" value="mRNA"/>
</dbReference>
<dbReference type="EMBL" id="AK030346">
    <property type="protein sequence ID" value="BAC26914.1"/>
    <property type="molecule type" value="mRNA"/>
</dbReference>
<dbReference type="EMBL" id="AK031117">
    <property type="protein sequence ID" value="BAC27260.1"/>
    <property type="molecule type" value="mRNA"/>
</dbReference>
<dbReference type="EMBL" id="AK147936">
    <property type="protein sequence ID" value="BAE28241.1"/>
    <property type="molecule type" value="mRNA"/>
</dbReference>
<dbReference type="EMBL" id="AK160834">
    <property type="protein sequence ID" value="BAE36038.1"/>
    <property type="molecule type" value="mRNA"/>
</dbReference>
<dbReference type="EMBL" id="BC020087">
    <property type="protein sequence ID" value="AAH20087.1"/>
    <property type="molecule type" value="mRNA"/>
</dbReference>
<dbReference type="CCDS" id="CCDS29110.1"/>
<dbReference type="RefSeq" id="NP_080441.1">
    <property type="nucleotide sequence ID" value="NM_026165.4"/>
</dbReference>
<dbReference type="BioGRID" id="212197">
    <property type="interactions" value="3"/>
</dbReference>
<dbReference type="FunCoup" id="Q9CQS4">
    <property type="interactions" value="2619"/>
</dbReference>
<dbReference type="IntAct" id="Q9CQS4">
    <property type="interactions" value="1"/>
</dbReference>
<dbReference type="MINT" id="Q9CQS4"/>
<dbReference type="STRING" id="10090.ENSMUSP00000053325"/>
<dbReference type="GlyGen" id="Q9CQS4">
    <property type="glycosylation" value="1 site, 1 O-linked glycan (1 site)"/>
</dbReference>
<dbReference type="iPTMnet" id="Q9CQS4"/>
<dbReference type="PhosphoSitePlus" id="Q9CQS4"/>
<dbReference type="SwissPalm" id="Q9CQS4"/>
<dbReference type="PaxDb" id="10090-ENSMUSP00000053325"/>
<dbReference type="PeptideAtlas" id="Q9CQS4"/>
<dbReference type="ProteomicsDB" id="260893"/>
<dbReference type="Pumba" id="Q9CQS4"/>
<dbReference type="Antibodypedia" id="13498">
    <property type="antibodies" value="116 antibodies from 23 providers"/>
</dbReference>
<dbReference type="DNASU" id="67453"/>
<dbReference type="Ensembl" id="ENSMUST00000060396.7">
    <property type="protein sequence ID" value="ENSMUSP00000053325.7"/>
    <property type="gene ID" value="ENSMUSG00000024259.10"/>
</dbReference>
<dbReference type="GeneID" id="67453"/>
<dbReference type="KEGG" id="mmu:67453"/>
<dbReference type="UCSC" id="uc008ehz.1">
    <property type="organism name" value="mouse"/>
</dbReference>
<dbReference type="AGR" id="MGI:1914703"/>
<dbReference type="CTD" id="91137"/>
<dbReference type="MGI" id="MGI:1914703">
    <property type="gene designation" value="Slc25a46"/>
</dbReference>
<dbReference type="VEuPathDB" id="HostDB:ENSMUSG00000024259"/>
<dbReference type="eggNOG" id="KOG2954">
    <property type="taxonomic scope" value="Eukaryota"/>
</dbReference>
<dbReference type="GeneTree" id="ENSGT00390000015874"/>
<dbReference type="HOGENOM" id="CLU_047010_0_0_1"/>
<dbReference type="InParanoid" id="Q9CQS4"/>
<dbReference type="OMA" id="RQCQVNH"/>
<dbReference type="OrthoDB" id="2403262at2759"/>
<dbReference type="PhylomeDB" id="Q9CQS4"/>
<dbReference type="TreeFam" id="TF313365"/>
<dbReference type="BioGRID-ORCS" id="67453">
    <property type="hits" value="6 hits in 76 CRISPR screens"/>
</dbReference>
<dbReference type="CD-CODE" id="CE726F99">
    <property type="entry name" value="Postsynaptic density"/>
</dbReference>
<dbReference type="ChiTaRS" id="Slc25a46">
    <property type="organism name" value="mouse"/>
</dbReference>
<dbReference type="PRO" id="PR:Q9CQS4"/>
<dbReference type="Proteomes" id="UP000000589">
    <property type="component" value="Chromosome 18"/>
</dbReference>
<dbReference type="RNAct" id="Q9CQS4">
    <property type="molecule type" value="protein"/>
</dbReference>
<dbReference type="Bgee" id="ENSMUSG00000024259">
    <property type="expression patterns" value="Expressed in supraoptic nucleus and 267 other cell types or tissues"/>
</dbReference>
<dbReference type="ExpressionAtlas" id="Q9CQS4">
    <property type="expression patterns" value="baseline and differential"/>
</dbReference>
<dbReference type="GO" id="GO:0005741">
    <property type="term" value="C:mitochondrial outer membrane"/>
    <property type="evidence" value="ECO:0000314"/>
    <property type="project" value="MGI"/>
</dbReference>
<dbReference type="GO" id="GO:0005739">
    <property type="term" value="C:mitochondrion"/>
    <property type="evidence" value="ECO:0000314"/>
    <property type="project" value="MGI"/>
</dbReference>
<dbReference type="GO" id="GO:0044877">
    <property type="term" value="F:protein-containing complex binding"/>
    <property type="evidence" value="ECO:0007669"/>
    <property type="project" value="Ensembl"/>
</dbReference>
<dbReference type="GO" id="GO:0000422">
    <property type="term" value="P:autophagy of mitochondrion"/>
    <property type="evidence" value="ECO:0000315"/>
    <property type="project" value="MGI"/>
</dbReference>
<dbReference type="GO" id="GO:0021702">
    <property type="term" value="P:cerebellar Purkinje cell differentiation"/>
    <property type="evidence" value="ECO:0000315"/>
    <property type="project" value="MGI"/>
</dbReference>
<dbReference type="GO" id="GO:0042407">
    <property type="term" value="P:cristae formation"/>
    <property type="evidence" value="ECO:0007669"/>
    <property type="project" value="Ensembl"/>
</dbReference>
<dbReference type="GO" id="GO:0016358">
    <property type="term" value="P:dendrite development"/>
    <property type="evidence" value="ECO:0000315"/>
    <property type="project" value="MGI"/>
</dbReference>
<dbReference type="GO" id="GO:0051649">
    <property type="term" value="P:establishment of localization in cell"/>
    <property type="evidence" value="ECO:0000315"/>
    <property type="project" value="MGI"/>
</dbReference>
<dbReference type="GO" id="GO:0031987">
    <property type="term" value="P:locomotion involved in locomotory behavior"/>
    <property type="evidence" value="ECO:0000315"/>
    <property type="project" value="MGI"/>
</dbReference>
<dbReference type="GO" id="GO:0000266">
    <property type="term" value="P:mitochondrial fission"/>
    <property type="evidence" value="ECO:0000250"/>
    <property type="project" value="UniProtKB"/>
</dbReference>
<dbReference type="GO" id="GO:0090149">
    <property type="term" value="P:mitochondrial membrane fission"/>
    <property type="evidence" value="ECO:0007669"/>
    <property type="project" value="InterPro"/>
</dbReference>
<dbReference type="GO" id="GO:0006839">
    <property type="term" value="P:mitochondrial transport"/>
    <property type="evidence" value="ECO:0000315"/>
    <property type="project" value="MGI"/>
</dbReference>
<dbReference type="GO" id="GO:0007005">
    <property type="term" value="P:mitochondrion organization"/>
    <property type="evidence" value="ECO:0000315"/>
    <property type="project" value="MGI"/>
</dbReference>
<dbReference type="GO" id="GO:0022011">
    <property type="term" value="P:myelination in peripheral nervous system"/>
    <property type="evidence" value="ECO:0000315"/>
    <property type="project" value="MGI"/>
</dbReference>
<dbReference type="GO" id="GO:0021554">
    <property type="term" value="P:optic nerve development"/>
    <property type="evidence" value="ECO:0000315"/>
    <property type="project" value="MGI"/>
</dbReference>
<dbReference type="GO" id="GO:0048936">
    <property type="term" value="P:peripheral nervous system neuron axonogenesis"/>
    <property type="evidence" value="ECO:0000315"/>
    <property type="project" value="MGI"/>
</dbReference>
<dbReference type="GO" id="GO:0055091">
    <property type="term" value="P:phospholipid homeostasis"/>
    <property type="evidence" value="ECO:0007669"/>
    <property type="project" value="Ensembl"/>
</dbReference>
<dbReference type="GO" id="GO:0008535">
    <property type="term" value="P:respiratory chain complex IV assembly"/>
    <property type="evidence" value="ECO:0007669"/>
    <property type="project" value="Ensembl"/>
</dbReference>
<dbReference type="GO" id="GO:0007416">
    <property type="term" value="P:synapse assembly"/>
    <property type="evidence" value="ECO:0000315"/>
    <property type="project" value="MGI"/>
</dbReference>
<dbReference type="FunFam" id="1.50.40.10:FF:000057">
    <property type="entry name" value="Solute carrier family 25 member 46"/>
    <property type="match status" value="1"/>
</dbReference>
<dbReference type="Gene3D" id="1.50.40.10">
    <property type="entry name" value="Mitochondrial carrier domain"/>
    <property type="match status" value="1"/>
</dbReference>
<dbReference type="InterPro" id="IPR018108">
    <property type="entry name" value="Mitochondrial_sb/sol_carrier"/>
</dbReference>
<dbReference type="InterPro" id="IPR023395">
    <property type="entry name" value="Mt_carrier_dom_sf"/>
</dbReference>
<dbReference type="InterPro" id="IPR039158">
    <property type="entry name" value="SLC25A46"/>
</dbReference>
<dbReference type="PANTHER" id="PTHR21252:SF2">
    <property type="entry name" value="MITOCHONDRIAL OUTER MEMBRANE PROTEIN SLC25A46"/>
    <property type="match status" value="1"/>
</dbReference>
<dbReference type="PANTHER" id="PTHR21252">
    <property type="entry name" value="TB1 PROTEIN-RELATED"/>
    <property type="match status" value="1"/>
</dbReference>
<dbReference type="Pfam" id="PF00153">
    <property type="entry name" value="Mito_carr"/>
    <property type="match status" value="2"/>
</dbReference>
<dbReference type="SUPFAM" id="SSF103506">
    <property type="entry name" value="Mitochondrial carrier"/>
    <property type="match status" value="1"/>
</dbReference>
<dbReference type="PROSITE" id="PS50920">
    <property type="entry name" value="SOLCAR"/>
    <property type="match status" value="2"/>
</dbReference>
<accession>Q9CQS4</accession>
<accession>Q3TUD3</accession>
<accession>Q3UGG7</accession>
<accession>Q8VDX9</accession>
<feature type="chain" id="PRO_0000291829" description="Mitochondrial outer membrane protein SLC25A46">
    <location>
        <begin position="1"/>
        <end position="418"/>
    </location>
</feature>
<feature type="transmembrane region" description="Helical; Name=1" evidence="3">
    <location>
        <begin position="103"/>
        <end position="123"/>
    </location>
</feature>
<feature type="transmembrane region" description="Helical; Name=2" evidence="3">
    <location>
        <begin position="167"/>
        <end position="187"/>
    </location>
</feature>
<feature type="transmembrane region" description="Helical; Name=3" evidence="3">
    <location>
        <begin position="202"/>
        <end position="222"/>
    </location>
</feature>
<feature type="transmembrane region" description="Helical; Name=4" evidence="3">
    <location>
        <begin position="258"/>
        <end position="278"/>
    </location>
</feature>
<feature type="transmembrane region" description="Helical; Name=5" evidence="3">
    <location>
        <begin position="314"/>
        <end position="334"/>
    </location>
</feature>
<feature type="transmembrane region" description="Helical; Name=6" evidence="3">
    <location>
        <begin position="382"/>
        <end position="402"/>
    </location>
</feature>
<feature type="repeat" description="Solcar 1">
    <location>
        <begin position="96"/>
        <end position="187"/>
    </location>
</feature>
<feature type="repeat" description="Solcar 2">
    <location>
        <begin position="311"/>
        <end position="413"/>
    </location>
</feature>
<feature type="region of interest" description="Disordered" evidence="4">
    <location>
        <begin position="46"/>
        <end position="96"/>
    </location>
</feature>
<feature type="modified residue" description="Phosphoserine" evidence="7">
    <location>
        <position position="32"/>
    </location>
</feature>
<feature type="modified residue" description="Phosphoserine" evidence="1">
    <location>
        <position position="35"/>
    </location>
</feature>
<feature type="modified residue" description="Phosphothreonine" evidence="7">
    <location>
        <position position="45"/>
    </location>
</feature>
<feature type="sequence conflict" description="In Ref. 1; BAE28241." evidence="5" ref="1">
    <original>D</original>
    <variation>G</variation>
    <location>
        <position position="48"/>
    </location>
</feature>
<feature type="sequence conflict" description="In Ref. 1; BAE36038." evidence="5" ref="1">
    <original>E</original>
    <variation>G</variation>
    <location>
        <position position="59"/>
    </location>
</feature>
<feature type="sequence conflict" description="In Ref. 2; AAH20087." evidence="5" ref="2">
    <original>G</original>
    <variation>S</variation>
    <location>
        <position position="85"/>
    </location>
</feature>
<protein>
    <recommendedName>
        <fullName evidence="2">Mitochondrial outer membrane protein SLC25A46</fullName>
    </recommendedName>
    <alternativeName>
        <fullName evidence="6">Solute carrier family 25 member 46</fullName>
    </alternativeName>
</protein>